<proteinExistence type="inferred from homology"/>
<accession>B5XYA8</accession>
<organism>
    <name type="scientific">Klebsiella pneumoniae (strain 342)</name>
    <dbReference type="NCBI Taxonomy" id="507522"/>
    <lineage>
        <taxon>Bacteria</taxon>
        <taxon>Pseudomonadati</taxon>
        <taxon>Pseudomonadota</taxon>
        <taxon>Gammaproteobacteria</taxon>
        <taxon>Enterobacterales</taxon>
        <taxon>Enterobacteriaceae</taxon>
        <taxon>Klebsiella/Raoultella group</taxon>
        <taxon>Klebsiella</taxon>
        <taxon>Klebsiella pneumoniae complex</taxon>
    </lineage>
</organism>
<sequence>MRLVQLSRHSIAFPSPEGALREPNGLLALGGDLSPARLLMAYQRGIFPWFSPGDPILWWSPDPRAVLWPEQFHLSRSMKRFHQRSPYRVTLNHAFGEVIEGCASDRDEGTWITSSIVRAYHQLHELGHAHSIEVWQENTLVGGMYGVAQGALFCGESMFSRAENASKTALLVFCQAFTQSGGKLIDCQVLNNHTASLGAVDIPRRDYLDYLSVLRGYRLPELFWVPRVLFPGAQ</sequence>
<name>LFTR_KLEP3</name>
<keyword id="KW-0012">Acyltransferase</keyword>
<keyword id="KW-0963">Cytoplasm</keyword>
<keyword id="KW-0808">Transferase</keyword>
<gene>
    <name evidence="1" type="primary">aat</name>
    <name type="ordered locus">KPK_3645</name>
</gene>
<protein>
    <recommendedName>
        <fullName evidence="1">Leucyl/phenylalanyl-tRNA--protein transferase</fullName>
        <ecNumber evidence="1">2.3.2.6</ecNumber>
    </recommendedName>
    <alternativeName>
        <fullName evidence="1">L/F-transferase</fullName>
    </alternativeName>
    <alternativeName>
        <fullName evidence="1">Leucyltransferase</fullName>
    </alternativeName>
    <alternativeName>
        <fullName evidence="1">Phenyalanyltransferase</fullName>
    </alternativeName>
</protein>
<feature type="chain" id="PRO_1000131929" description="Leucyl/phenylalanyl-tRNA--protein transferase">
    <location>
        <begin position="1"/>
        <end position="234"/>
    </location>
</feature>
<comment type="function">
    <text evidence="1">Functions in the N-end rule pathway of protein degradation where it conjugates Leu, Phe and, less efficiently, Met from aminoacyl-tRNAs to the N-termini of proteins containing an N-terminal arginine or lysine.</text>
</comment>
<comment type="catalytic activity">
    <reaction evidence="1">
        <text>N-terminal L-lysyl-[protein] + L-leucyl-tRNA(Leu) = N-terminal L-leucyl-L-lysyl-[protein] + tRNA(Leu) + H(+)</text>
        <dbReference type="Rhea" id="RHEA:12340"/>
        <dbReference type="Rhea" id="RHEA-COMP:9613"/>
        <dbReference type="Rhea" id="RHEA-COMP:9622"/>
        <dbReference type="Rhea" id="RHEA-COMP:12670"/>
        <dbReference type="Rhea" id="RHEA-COMP:12671"/>
        <dbReference type="ChEBI" id="CHEBI:15378"/>
        <dbReference type="ChEBI" id="CHEBI:65249"/>
        <dbReference type="ChEBI" id="CHEBI:78442"/>
        <dbReference type="ChEBI" id="CHEBI:78494"/>
        <dbReference type="ChEBI" id="CHEBI:133043"/>
        <dbReference type="EC" id="2.3.2.6"/>
    </reaction>
</comment>
<comment type="catalytic activity">
    <reaction evidence="1">
        <text>N-terminal L-arginyl-[protein] + L-leucyl-tRNA(Leu) = N-terminal L-leucyl-L-arginyl-[protein] + tRNA(Leu) + H(+)</text>
        <dbReference type="Rhea" id="RHEA:50416"/>
        <dbReference type="Rhea" id="RHEA-COMP:9613"/>
        <dbReference type="Rhea" id="RHEA-COMP:9622"/>
        <dbReference type="Rhea" id="RHEA-COMP:12672"/>
        <dbReference type="Rhea" id="RHEA-COMP:12673"/>
        <dbReference type="ChEBI" id="CHEBI:15378"/>
        <dbReference type="ChEBI" id="CHEBI:64719"/>
        <dbReference type="ChEBI" id="CHEBI:78442"/>
        <dbReference type="ChEBI" id="CHEBI:78494"/>
        <dbReference type="ChEBI" id="CHEBI:133044"/>
        <dbReference type="EC" id="2.3.2.6"/>
    </reaction>
</comment>
<comment type="catalytic activity">
    <reaction evidence="1">
        <text>L-phenylalanyl-tRNA(Phe) + an N-terminal L-alpha-aminoacyl-[protein] = an N-terminal L-phenylalanyl-L-alpha-aminoacyl-[protein] + tRNA(Phe)</text>
        <dbReference type="Rhea" id="RHEA:43632"/>
        <dbReference type="Rhea" id="RHEA-COMP:9668"/>
        <dbReference type="Rhea" id="RHEA-COMP:9699"/>
        <dbReference type="Rhea" id="RHEA-COMP:10636"/>
        <dbReference type="Rhea" id="RHEA-COMP:10637"/>
        <dbReference type="ChEBI" id="CHEBI:78442"/>
        <dbReference type="ChEBI" id="CHEBI:78531"/>
        <dbReference type="ChEBI" id="CHEBI:78597"/>
        <dbReference type="ChEBI" id="CHEBI:83561"/>
        <dbReference type="EC" id="2.3.2.6"/>
    </reaction>
</comment>
<comment type="subcellular location">
    <subcellularLocation>
        <location evidence="1">Cytoplasm</location>
    </subcellularLocation>
</comment>
<comment type="similarity">
    <text evidence="1">Belongs to the L/F-transferase family.</text>
</comment>
<reference key="1">
    <citation type="journal article" date="2008" name="PLoS Genet.">
        <title>Complete genome sequence of the N2-fixing broad host range endophyte Klebsiella pneumoniae 342 and virulence predictions verified in mice.</title>
        <authorList>
            <person name="Fouts D.E."/>
            <person name="Tyler H.L."/>
            <person name="DeBoy R.T."/>
            <person name="Daugherty S."/>
            <person name="Ren Q."/>
            <person name="Badger J.H."/>
            <person name="Durkin A.S."/>
            <person name="Huot H."/>
            <person name="Shrivastava S."/>
            <person name="Kothari S."/>
            <person name="Dodson R.J."/>
            <person name="Mohamoud Y."/>
            <person name="Khouri H."/>
            <person name="Roesch L.F.W."/>
            <person name="Krogfelt K.A."/>
            <person name="Struve C."/>
            <person name="Triplett E.W."/>
            <person name="Methe B.A."/>
        </authorList>
    </citation>
    <scope>NUCLEOTIDE SEQUENCE [LARGE SCALE GENOMIC DNA]</scope>
    <source>
        <strain>342</strain>
    </source>
</reference>
<evidence type="ECO:0000255" key="1">
    <source>
        <dbReference type="HAMAP-Rule" id="MF_00688"/>
    </source>
</evidence>
<dbReference type="EC" id="2.3.2.6" evidence="1"/>
<dbReference type="EMBL" id="CP000964">
    <property type="protein sequence ID" value="ACI10349.1"/>
    <property type="molecule type" value="Genomic_DNA"/>
</dbReference>
<dbReference type="SMR" id="B5XYA8"/>
<dbReference type="KEGG" id="kpe:KPK_3645"/>
<dbReference type="HOGENOM" id="CLU_075045_0_0_6"/>
<dbReference type="Proteomes" id="UP000001734">
    <property type="component" value="Chromosome"/>
</dbReference>
<dbReference type="GO" id="GO:0005737">
    <property type="term" value="C:cytoplasm"/>
    <property type="evidence" value="ECO:0007669"/>
    <property type="project" value="UniProtKB-SubCell"/>
</dbReference>
<dbReference type="GO" id="GO:0008914">
    <property type="term" value="F:leucyl-tRNA--protein transferase activity"/>
    <property type="evidence" value="ECO:0007669"/>
    <property type="project" value="UniProtKB-UniRule"/>
</dbReference>
<dbReference type="GO" id="GO:0030163">
    <property type="term" value="P:protein catabolic process"/>
    <property type="evidence" value="ECO:0007669"/>
    <property type="project" value="UniProtKB-UniRule"/>
</dbReference>
<dbReference type="FunFam" id="3.30.70.3550:FF:000001">
    <property type="entry name" value="Leucyl/phenylalanyl-tRNA--protein transferase"/>
    <property type="match status" value="1"/>
</dbReference>
<dbReference type="FunFam" id="3.40.630.70:FF:000001">
    <property type="entry name" value="Leucyl/phenylalanyl-tRNA--protein transferase"/>
    <property type="match status" value="1"/>
</dbReference>
<dbReference type="Gene3D" id="3.40.630.70">
    <property type="entry name" value="Leucyl/phenylalanyl-tRNA-protein transferase, C-terminal domain"/>
    <property type="match status" value="1"/>
</dbReference>
<dbReference type="Gene3D" id="3.30.70.3550">
    <property type="entry name" value="Leucyl/phenylalanyl-tRNA-protein transferase, N-terminal domain"/>
    <property type="match status" value="1"/>
</dbReference>
<dbReference type="HAMAP" id="MF_00688">
    <property type="entry name" value="Leu_Phe_trans"/>
    <property type="match status" value="1"/>
</dbReference>
<dbReference type="InterPro" id="IPR016181">
    <property type="entry name" value="Acyl_CoA_acyltransferase"/>
</dbReference>
<dbReference type="InterPro" id="IPR004616">
    <property type="entry name" value="Leu/Phe-tRNA_Trfase"/>
</dbReference>
<dbReference type="InterPro" id="IPR042203">
    <property type="entry name" value="Leu/Phe-tRNA_Trfase_C"/>
</dbReference>
<dbReference type="InterPro" id="IPR042221">
    <property type="entry name" value="Leu/Phe-tRNA_Trfase_N"/>
</dbReference>
<dbReference type="NCBIfam" id="TIGR00667">
    <property type="entry name" value="aat"/>
    <property type="match status" value="1"/>
</dbReference>
<dbReference type="PANTHER" id="PTHR30098">
    <property type="entry name" value="LEUCYL/PHENYLALANYL-TRNA--PROTEIN TRANSFERASE"/>
    <property type="match status" value="1"/>
</dbReference>
<dbReference type="PANTHER" id="PTHR30098:SF2">
    <property type="entry name" value="LEUCYL_PHENYLALANYL-TRNA--PROTEIN TRANSFERASE"/>
    <property type="match status" value="1"/>
</dbReference>
<dbReference type="Pfam" id="PF03588">
    <property type="entry name" value="Leu_Phe_trans"/>
    <property type="match status" value="1"/>
</dbReference>
<dbReference type="SUPFAM" id="SSF55729">
    <property type="entry name" value="Acyl-CoA N-acyltransferases (Nat)"/>
    <property type="match status" value="1"/>
</dbReference>